<gene>
    <name evidence="1" type="primary">rimM</name>
    <name type="ordered locus">BCI_0197</name>
</gene>
<name>RIMM_BAUCH</name>
<dbReference type="EMBL" id="CP000238">
    <property type="protein sequence ID" value="ABF13906.1"/>
    <property type="molecule type" value="Genomic_DNA"/>
</dbReference>
<dbReference type="SMR" id="Q1LTR0"/>
<dbReference type="STRING" id="374463.BCI_0197"/>
<dbReference type="KEGG" id="bci:BCI_0197"/>
<dbReference type="HOGENOM" id="CLU_077636_1_0_6"/>
<dbReference type="OrthoDB" id="9783509at2"/>
<dbReference type="Proteomes" id="UP000002427">
    <property type="component" value="Chromosome"/>
</dbReference>
<dbReference type="GO" id="GO:0005737">
    <property type="term" value="C:cytoplasm"/>
    <property type="evidence" value="ECO:0007669"/>
    <property type="project" value="UniProtKB-SubCell"/>
</dbReference>
<dbReference type="GO" id="GO:0005840">
    <property type="term" value="C:ribosome"/>
    <property type="evidence" value="ECO:0007669"/>
    <property type="project" value="InterPro"/>
</dbReference>
<dbReference type="GO" id="GO:0043022">
    <property type="term" value="F:ribosome binding"/>
    <property type="evidence" value="ECO:0007669"/>
    <property type="project" value="InterPro"/>
</dbReference>
<dbReference type="GO" id="GO:0042274">
    <property type="term" value="P:ribosomal small subunit biogenesis"/>
    <property type="evidence" value="ECO:0007669"/>
    <property type="project" value="UniProtKB-UniRule"/>
</dbReference>
<dbReference type="GO" id="GO:0006364">
    <property type="term" value="P:rRNA processing"/>
    <property type="evidence" value="ECO:0007669"/>
    <property type="project" value="UniProtKB-UniRule"/>
</dbReference>
<dbReference type="Gene3D" id="2.30.30.240">
    <property type="entry name" value="PRC-barrel domain"/>
    <property type="match status" value="1"/>
</dbReference>
<dbReference type="Gene3D" id="2.40.30.60">
    <property type="entry name" value="RimM"/>
    <property type="match status" value="1"/>
</dbReference>
<dbReference type="HAMAP" id="MF_00014">
    <property type="entry name" value="Ribosome_mat_RimM"/>
    <property type="match status" value="1"/>
</dbReference>
<dbReference type="InterPro" id="IPR011033">
    <property type="entry name" value="PRC_barrel-like_sf"/>
</dbReference>
<dbReference type="InterPro" id="IPR056792">
    <property type="entry name" value="PRC_RimM"/>
</dbReference>
<dbReference type="InterPro" id="IPR011961">
    <property type="entry name" value="RimM"/>
</dbReference>
<dbReference type="InterPro" id="IPR002676">
    <property type="entry name" value="RimM_N"/>
</dbReference>
<dbReference type="InterPro" id="IPR036976">
    <property type="entry name" value="RimM_N_sf"/>
</dbReference>
<dbReference type="InterPro" id="IPR009000">
    <property type="entry name" value="Transl_B-barrel_sf"/>
</dbReference>
<dbReference type="NCBIfam" id="TIGR02273">
    <property type="entry name" value="16S_RimM"/>
    <property type="match status" value="1"/>
</dbReference>
<dbReference type="PANTHER" id="PTHR33692">
    <property type="entry name" value="RIBOSOME MATURATION FACTOR RIMM"/>
    <property type="match status" value="1"/>
</dbReference>
<dbReference type="PANTHER" id="PTHR33692:SF1">
    <property type="entry name" value="RIBOSOME MATURATION FACTOR RIMM"/>
    <property type="match status" value="1"/>
</dbReference>
<dbReference type="Pfam" id="PF24986">
    <property type="entry name" value="PRC_RimM"/>
    <property type="match status" value="1"/>
</dbReference>
<dbReference type="Pfam" id="PF01782">
    <property type="entry name" value="RimM"/>
    <property type="match status" value="1"/>
</dbReference>
<dbReference type="SUPFAM" id="SSF50346">
    <property type="entry name" value="PRC-barrel domain"/>
    <property type="match status" value="1"/>
</dbReference>
<dbReference type="SUPFAM" id="SSF50447">
    <property type="entry name" value="Translation proteins"/>
    <property type="match status" value="1"/>
</dbReference>
<comment type="function">
    <text evidence="1">An accessory protein needed during the final step in the assembly of 30S ribosomal subunit, possibly for assembly of the head region. Essential for efficient processing of 16S rRNA. May be needed both before and after RbfA during the maturation of 16S rRNA. It has affinity for free ribosomal 30S subunits but not for 70S ribosomes.</text>
</comment>
<comment type="subunit">
    <text evidence="1">Binds ribosomal protein uS19.</text>
</comment>
<comment type="subcellular location">
    <subcellularLocation>
        <location evidence="1">Cytoplasm</location>
    </subcellularLocation>
</comment>
<comment type="domain">
    <text evidence="1">The PRC barrel domain binds ribosomal protein uS19.</text>
</comment>
<comment type="similarity">
    <text evidence="1">Belongs to the RimM family.</text>
</comment>
<sequence length="175" mass="19968">MPVNPVVLGTISSAYGISGWLNIISFTQNAASIFEYQPWFIKKLNTWLDVILDEWKYNYHNKLIIKINSIENREAAQLFANCNIIVDASQLPTLSDGDYYWKDLIGCQVETINSYQLGKVIDLIETGSNDVMVVQANQQHSTKINELLIPFIYGQVIKNVDLATHIIKVDWDPEF</sequence>
<feature type="chain" id="PRO_0000321715" description="Ribosome maturation factor RimM">
    <location>
        <begin position="1"/>
        <end position="175"/>
    </location>
</feature>
<feature type="domain" description="PRC barrel" evidence="1">
    <location>
        <begin position="96"/>
        <end position="175"/>
    </location>
</feature>
<proteinExistence type="inferred from homology"/>
<organism>
    <name type="scientific">Baumannia cicadellinicola subsp. Homalodisca coagulata</name>
    <dbReference type="NCBI Taxonomy" id="374463"/>
    <lineage>
        <taxon>Bacteria</taxon>
        <taxon>Pseudomonadati</taxon>
        <taxon>Pseudomonadota</taxon>
        <taxon>Gammaproteobacteria</taxon>
        <taxon>Candidatus Palibaumannia</taxon>
    </lineage>
</organism>
<evidence type="ECO:0000255" key="1">
    <source>
        <dbReference type="HAMAP-Rule" id="MF_00014"/>
    </source>
</evidence>
<reference key="1">
    <citation type="journal article" date="2006" name="PLoS Biol.">
        <title>Metabolic complementarity and genomics of the dual bacterial symbiosis of sharpshooters.</title>
        <authorList>
            <person name="Wu D."/>
            <person name="Daugherty S.C."/>
            <person name="Van Aken S.E."/>
            <person name="Pai G.H."/>
            <person name="Watkins K.L."/>
            <person name="Khouri H."/>
            <person name="Tallon L.J."/>
            <person name="Zaborsky J.M."/>
            <person name="Dunbar H.E."/>
            <person name="Tran P.L."/>
            <person name="Moran N.A."/>
            <person name="Eisen J.A."/>
        </authorList>
    </citation>
    <scope>NUCLEOTIDE SEQUENCE [LARGE SCALE GENOMIC DNA]</scope>
</reference>
<keyword id="KW-0143">Chaperone</keyword>
<keyword id="KW-0963">Cytoplasm</keyword>
<keyword id="KW-1185">Reference proteome</keyword>
<keyword id="KW-0690">Ribosome biogenesis</keyword>
<keyword id="KW-0698">rRNA processing</keyword>
<accession>Q1LTR0</accession>
<protein>
    <recommendedName>
        <fullName evidence="1">Ribosome maturation factor RimM</fullName>
    </recommendedName>
</protein>